<accession>Q8CBB9</accession>
<accession>Q3U5I6</accession>
<accession>Q3U5T4</accession>
<accession>Q3U622</accession>
<accession>Q3U627</accession>
<accession>Q3U7I6</accession>
<accession>Q3U7M1</accession>
<accession>Q3U8F4</accession>
<accession>Q3U8U7</accession>
<accession>Q3U941</accession>
<accession>Q3U977</accession>
<accession>Q3U9E1</accession>
<accession>Q3U9J0</accession>
<accession>Q3U9J3</accession>
<accession>Q3UBW6</accession>
<accession>Q3UC07</accession>
<accession>Q3UDI0</accession>
<accession>Q6PEU4</accession>
<accession>Q8VHM2</accession>
<accession>Q9JHD4</accession>
<dbReference type="EC" id="4.2.-.-" evidence="1"/>
<dbReference type="EMBL" id="AF236064">
    <property type="protein sequence ID" value="AAF60314.2"/>
    <property type="molecule type" value="mRNA"/>
</dbReference>
<dbReference type="EMBL" id="AK036373">
    <property type="protein sequence ID" value="BAC29401.1"/>
    <property type="molecule type" value="mRNA"/>
</dbReference>
<dbReference type="EMBL" id="AK150069">
    <property type="protein sequence ID" value="BAE29281.1"/>
    <property type="status" value="ALT_SEQ"/>
    <property type="molecule type" value="mRNA"/>
</dbReference>
<dbReference type="EMBL" id="AK150406">
    <property type="protein sequence ID" value="BAE29532.1"/>
    <property type="molecule type" value="mRNA"/>
</dbReference>
<dbReference type="EMBL" id="AK150425">
    <property type="protein sequence ID" value="BAE29548.1"/>
    <property type="molecule type" value="mRNA"/>
</dbReference>
<dbReference type="EMBL" id="AK150525">
    <property type="protein sequence ID" value="BAE29636.1"/>
    <property type="molecule type" value="mRNA"/>
</dbReference>
<dbReference type="EMBL" id="AK150616">
    <property type="protein sequence ID" value="BAE29706.1"/>
    <property type="molecule type" value="mRNA"/>
</dbReference>
<dbReference type="EMBL" id="AK150684">
    <property type="protein sequence ID" value="BAE29764.1"/>
    <property type="molecule type" value="mRNA"/>
</dbReference>
<dbReference type="EMBL" id="AK150731">
    <property type="protein sequence ID" value="BAE29807.1"/>
    <property type="molecule type" value="mRNA"/>
</dbReference>
<dbReference type="EMBL" id="AK150767">
    <property type="protein sequence ID" value="BAE29833.1"/>
    <property type="molecule type" value="mRNA"/>
</dbReference>
<dbReference type="EMBL" id="AK150783">
    <property type="protein sequence ID" value="BAE29848.1"/>
    <property type="molecule type" value="mRNA"/>
</dbReference>
<dbReference type="EMBL" id="AK150788">
    <property type="protein sequence ID" value="BAE29852.1"/>
    <property type="molecule type" value="mRNA"/>
</dbReference>
<dbReference type="EMBL" id="AK150812">
    <property type="protein sequence ID" value="BAE29875.1"/>
    <property type="molecule type" value="mRNA"/>
</dbReference>
<dbReference type="EMBL" id="AK150835">
    <property type="protein sequence ID" value="BAE29895.1"/>
    <property type="molecule type" value="mRNA"/>
</dbReference>
<dbReference type="EMBL" id="AK151140">
    <property type="protein sequence ID" value="BAE30147.1"/>
    <property type="molecule type" value="mRNA"/>
</dbReference>
<dbReference type="EMBL" id="AK151185">
    <property type="protein sequence ID" value="BAE30184.1"/>
    <property type="molecule type" value="mRNA"/>
</dbReference>
<dbReference type="EMBL" id="AK151191">
    <property type="protein sequence ID" value="BAE30188.1"/>
    <property type="molecule type" value="mRNA"/>
</dbReference>
<dbReference type="EMBL" id="AK151206">
    <property type="protein sequence ID" value="BAE30203.1"/>
    <property type="molecule type" value="mRNA"/>
</dbReference>
<dbReference type="EMBL" id="AK151286">
    <property type="protein sequence ID" value="BAE30271.1"/>
    <property type="molecule type" value="mRNA"/>
</dbReference>
<dbReference type="EMBL" id="AK151308">
    <property type="protein sequence ID" value="BAE30290.1"/>
    <property type="molecule type" value="mRNA"/>
</dbReference>
<dbReference type="EMBL" id="AK151339">
    <property type="protein sequence ID" value="BAE30317.1"/>
    <property type="molecule type" value="mRNA"/>
</dbReference>
<dbReference type="EMBL" id="AK151389">
    <property type="protein sequence ID" value="BAE30360.1"/>
    <property type="molecule type" value="mRNA"/>
</dbReference>
<dbReference type="EMBL" id="AK151410">
    <property type="protein sequence ID" value="BAE30375.1"/>
    <property type="molecule type" value="mRNA"/>
</dbReference>
<dbReference type="EMBL" id="AK151412">
    <property type="protein sequence ID" value="BAE30377.1"/>
    <property type="molecule type" value="mRNA"/>
</dbReference>
<dbReference type="EMBL" id="AK151414">
    <property type="protein sequence ID" value="BAE30379.1"/>
    <property type="molecule type" value="mRNA"/>
</dbReference>
<dbReference type="EMBL" id="AK151476">
    <property type="protein sequence ID" value="BAE30431.1"/>
    <property type="molecule type" value="mRNA"/>
</dbReference>
<dbReference type="EMBL" id="AK151502">
    <property type="protein sequence ID" value="BAE30453.1"/>
    <property type="molecule type" value="mRNA"/>
</dbReference>
<dbReference type="EMBL" id="AK151538">
    <property type="protein sequence ID" value="BAE30485.1"/>
    <property type="molecule type" value="mRNA"/>
</dbReference>
<dbReference type="EMBL" id="AK151767">
    <property type="protein sequence ID" value="BAE30673.1"/>
    <property type="molecule type" value="mRNA"/>
</dbReference>
<dbReference type="EMBL" id="AK151770">
    <property type="protein sequence ID" value="BAE30676.1"/>
    <property type="molecule type" value="mRNA"/>
</dbReference>
<dbReference type="EMBL" id="AK151825">
    <property type="protein sequence ID" value="BAE30722.1"/>
    <property type="molecule type" value="mRNA"/>
</dbReference>
<dbReference type="EMBL" id="AK151833">
    <property type="protein sequence ID" value="BAE30726.1"/>
    <property type="molecule type" value="mRNA"/>
</dbReference>
<dbReference type="EMBL" id="AK151846">
    <property type="protein sequence ID" value="BAE30737.1"/>
    <property type="molecule type" value="mRNA"/>
</dbReference>
<dbReference type="EMBL" id="AK151906">
    <property type="protein sequence ID" value="BAE30787.1"/>
    <property type="molecule type" value="mRNA"/>
</dbReference>
<dbReference type="EMBL" id="AK151909">
    <property type="protein sequence ID" value="BAE30790.1"/>
    <property type="molecule type" value="mRNA"/>
</dbReference>
<dbReference type="EMBL" id="AK151940">
    <property type="protein sequence ID" value="BAE30816.1"/>
    <property type="molecule type" value="mRNA"/>
</dbReference>
<dbReference type="EMBL" id="AK151954">
    <property type="protein sequence ID" value="BAE30826.1"/>
    <property type="molecule type" value="mRNA"/>
</dbReference>
<dbReference type="EMBL" id="AK151971">
    <property type="protein sequence ID" value="BAE30840.1"/>
    <property type="molecule type" value="mRNA"/>
</dbReference>
<dbReference type="EMBL" id="AK152050">
    <property type="protein sequence ID" value="BAE30906.1"/>
    <property type="molecule type" value="mRNA"/>
</dbReference>
<dbReference type="EMBL" id="AK152065">
    <property type="protein sequence ID" value="BAE30920.1"/>
    <property type="molecule type" value="mRNA"/>
</dbReference>
<dbReference type="EMBL" id="AK152075">
    <property type="protein sequence ID" value="BAE30927.1"/>
    <property type="molecule type" value="mRNA"/>
</dbReference>
<dbReference type="EMBL" id="AK152235">
    <property type="protein sequence ID" value="BAE31060.1"/>
    <property type="molecule type" value="mRNA"/>
</dbReference>
<dbReference type="EMBL" id="AK152239">
    <property type="protein sequence ID" value="BAE31062.1"/>
    <property type="molecule type" value="mRNA"/>
</dbReference>
<dbReference type="EMBL" id="AK152241">
    <property type="protein sequence ID" value="BAE31064.1"/>
    <property type="molecule type" value="mRNA"/>
</dbReference>
<dbReference type="EMBL" id="AK152310">
    <property type="protein sequence ID" value="BAE31116.1"/>
    <property type="molecule type" value="mRNA"/>
</dbReference>
<dbReference type="EMBL" id="AK152354">
    <property type="protein sequence ID" value="BAE31146.1"/>
    <property type="molecule type" value="mRNA"/>
</dbReference>
<dbReference type="EMBL" id="AK152493">
    <property type="protein sequence ID" value="BAE31264.1"/>
    <property type="molecule type" value="mRNA"/>
</dbReference>
<dbReference type="EMBL" id="AK152600">
    <property type="protein sequence ID" value="BAE31348.1"/>
    <property type="molecule type" value="mRNA"/>
</dbReference>
<dbReference type="EMBL" id="AK152601">
    <property type="protein sequence ID" value="BAE31349.1"/>
    <property type="molecule type" value="mRNA"/>
</dbReference>
<dbReference type="EMBL" id="AK152631">
    <property type="protein sequence ID" value="BAE31374.1"/>
    <property type="molecule type" value="mRNA"/>
</dbReference>
<dbReference type="EMBL" id="AK152644">
    <property type="protein sequence ID" value="BAE31383.1"/>
    <property type="molecule type" value="mRNA"/>
</dbReference>
<dbReference type="EMBL" id="AK152664">
    <property type="protein sequence ID" value="BAE31399.1"/>
    <property type="molecule type" value="mRNA"/>
</dbReference>
<dbReference type="EMBL" id="AK152796">
    <property type="protein sequence ID" value="BAE31501.1"/>
    <property type="molecule type" value="mRNA"/>
</dbReference>
<dbReference type="EMBL" id="AK152861">
    <property type="protein sequence ID" value="BAE31552.1"/>
    <property type="molecule type" value="mRNA"/>
</dbReference>
<dbReference type="EMBL" id="AK152880">
    <property type="protein sequence ID" value="BAE31565.1"/>
    <property type="molecule type" value="mRNA"/>
</dbReference>
<dbReference type="EMBL" id="AK152895">
    <property type="protein sequence ID" value="BAE31578.1"/>
    <property type="molecule type" value="mRNA"/>
</dbReference>
<dbReference type="EMBL" id="AK152934">
    <property type="protein sequence ID" value="BAE31608.1"/>
    <property type="molecule type" value="mRNA"/>
</dbReference>
<dbReference type="EMBL" id="AK152962">
    <property type="protein sequence ID" value="BAE31625.1"/>
    <property type="molecule type" value="mRNA"/>
</dbReference>
<dbReference type="EMBL" id="AK153003">
    <property type="protein sequence ID" value="BAE31643.1"/>
    <property type="molecule type" value="mRNA"/>
</dbReference>
<dbReference type="EMBL" id="AK153024">
    <property type="protein sequence ID" value="BAE31658.1"/>
    <property type="molecule type" value="mRNA"/>
</dbReference>
<dbReference type="EMBL" id="AK153062">
    <property type="protein sequence ID" value="BAE31688.1"/>
    <property type="molecule type" value="mRNA"/>
</dbReference>
<dbReference type="EMBL" id="AK153077">
    <property type="protein sequence ID" value="BAE31702.1"/>
    <property type="molecule type" value="mRNA"/>
</dbReference>
<dbReference type="EMBL" id="AK153078">
    <property type="protein sequence ID" value="BAE31703.1"/>
    <property type="molecule type" value="mRNA"/>
</dbReference>
<dbReference type="EMBL" id="AK153232">
    <property type="protein sequence ID" value="BAE31825.1"/>
    <property type="molecule type" value="mRNA"/>
</dbReference>
<dbReference type="EMBL" id="AK153234">
    <property type="protein sequence ID" value="BAE31827.1"/>
    <property type="molecule type" value="mRNA"/>
</dbReference>
<dbReference type="EMBL" id="AK153306">
    <property type="protein sequence ID" value="BAE31887.1"/>
    <property type="molecule type" value="mRNA"/>
</dbReference>
<dbReference type="EMBL" id="AK153318">
    <property type="protein sequence ID" value="BAE31898.1"/>
    <property type="molecule type" value="mRNA"/>
</dbReference>
<dbReference type="EMBL" id="AK153324">
    <property type="protein sequence ID" value="BAE31903.1"/>
    <property type="molecule type" value="mRNA"/>
</dbReference>
<dbReference type="EMBL" id="AK153435">
    <property type="protein sequence ID" value="BAE31992.1"/>
    <property type="molecule type" value="mRNA"/>
</dbReference>
<dbReference type="EMBL" id="AK153556">
    <property type="protein sequence ID" value="BAE32092.1"/>
    <property type="molecule type" value="mRNA"/>
</dbReference>
<dbReference type="EMBL" id="AK159147">
    <property type="protein sequence ID" value="BAE34854.1"/>
    <property type="molecule type" value="mRNA"/>
</dbReference>
<dbReference type="EMBL" id="CT010378">
    <property type="protein sequence ID" value="CAJ18585.1"/>
    <property type="molecule type" value="mRNA"/>
</dbReference>
<dbReference type="EMBL" id="BC057868">
    <property type="protein sequence ID" value="AAH57868.1"/>
    <property type="molecule type" value="mRNA"/>
</dbReference>
<dbReference type="EMBL" id="AF442152">
    <property type="protein sequence ID" value="AAL50054.1"/>
    <property type="molecule type" value="mRNA"/>
</dbReference>
<dbReference type="CCDS" id="CCDS25848.1"/>
<dbReference type="RefSeq" id="NP_067359.2">
    <property type="nucleotide sequence ID" value="NM_021384.4"/>
</dbReference>
<dbReference type="PDB" id="5VSL">
    <property type="method" value="X-ray"/>
    <property type="resolution" value="1.97 A"/>
    <property type="chains" value="A/B=45-362"/>
</dbReference>
<dbReference type="PDB" id="5VSM">
    <property type="method" value="X-ray"/>
    <property type="resolution" value="1.70 A"/>
    <property type="chains" value="A/B=45-362"/>
</dbReference>
<dbReference type="PDB" id="6Q2P">
    <property type="method" value="X-ray"/>
    <property type="resolution" value="1.45 A"/>
    <property type="chains" value="A/B=45-362"/>
</dbReference>
<dbReference type="PDB" id="6Q2Q">
    <property type="method" value="X-ray"/>
    <property type="resolution" value="1.89 A"/>
    <property type="chains" value="A/B=45-362"/>
</dbReference>
<dbReference type="PDBsum" id="5VSL"/>
<dbReference type="PDBsum" id="5VSM"/>
<dbReference type="PDBsum" id="6Q2P"/>
<dbReference type="PDBsum" id="6Q2Q"/>
<dbReference type="SMR" id="Q8CBB9"/>
<dbReference type="BioGRID" id="208378">
    <property type="interactions" value="11"/>
</dbReference>
<dbReference type="FunCoup" id="Q8CBB9">
    <property type="interactions" value="196"/>
</dbReference>
<dbReference type="STRING" id="10090.ENSMUSP00000020970"/>
<dbReference type="iPTMnet" id="Q8CBB9"/>
<dbReference type="PhosphoSitePlus" id="Q8CBB9"/>
<dbReference type="SwissPalm" id="Q8CBB9"/>
<dbReference type="PaxDb" id="10090-ENSMUSP00000020970"/>
<dbReference type="ProteomicsDB" id="257042"/>
<dbReference type="Antibodypedia" id="12336">
    <property type="antibodies" value="206 antibodies from 32 providers"/>
</dbReference>
<dbReference type="DNASU" id="58185"/>
<dbReference type="Ensembl" id="ENSMUST00000020970.10">
    <property type="protein sequence ID" value="ENSMUSP00000020970.8"/>
    <property type="gene ID" value="ENSMUSG00000020641.17"/>
</dbReference>
<dbReference type="GeneID" id="58185"/>
<dbReference type="KEGG" id="mmu:58185"/>
<dbReference type="UCSC" id="uc007nfh.2">
    <property type="organism name" value="mouse"/>
</dbReference>
<dbReference type="AGR" id="MGI:1929628"/>
<dbReference type="CTD" id="91543"/>
<dbReference type="MGI" id="MGI:1929628">
    <property type="gene designation" value="Rsad2"/>
</dbReference>
<dbReference type="VEuPathDB" id="HostDB:ENSMUSG00000020641"/>
<dbReference type="eggNOG" id="ENOG502QQMH">
    <property type="taxonomic scope" value="Eukaryota"/>
</dbReference>
<dbReference type="GeneTree" id="ENSGT00390000013670"/>
<dbReference type="HOGENOM" id="CLU_049058_2_1_1"/>
<dbReference type="InParanoid" id="Q8CBB9"/>
<dbReference type="OMA" id="ERWFKKY"/>
<dbReference type="OrthoDB" id="549750at2759"/>
<dbReference type="PhylomeDB" id="Q8CBB9"/>
<dbReference type="TreeFam" id="TF300085"/>
<dbReference type="BioGRID-ORCS" id="58185">
    <property type="hits" value="3 hits in 77 CRISPR screens"/>
</dbReference>
<dbReference type="PRO" id="PR:Q8CBB9"/>
<dbReference type="Proteomes" id="UP000000589">
    <property type="component" value="Chromosome 12"/>
</dbReference>
<dbReference type="RNAct" id="Q8CBB9">
    <property type="molecule type" value="protein"/>
</dbReference>
<dbReference type="Bgee" id="ENSMUSG00000020641">
    <property type="expression patterns" value="Expressed in blood and 165 other cell types or tissues"/>
</dbReference>
<dbReference type="ExpressionAtlas" id="Q8CBB9">
    <property type="expression patterns" value="baseline and differential"/>
</dbReference>
<dbReference type="GO" id="GO:0005783">
    <property type="term" value="C:endoplasmic reticulum"/>
    <property type="evidence" value="ECO:0000314"/>
    <property type="project" value="CACAO"/>
</dbReference>
<dbReference type="GO" id="GO:0005789">
    <property type="term" value="C:endoplasmic reticulum membrane"/>
    <property type="evidence" value="ECO:0000250"/>
    <property type="project" value="UniProtKB"/>
</dbReference>
<dbReference type="GO" id="GO:0001650">
    <property type="term" value="C:fibrillar center"/>
    <property type="evidence" value="ECO:0007669"/>
    <property type="project" value="Ensembl"/>
</dbReference>
<dbReference type="GO" id="GO:0005794">
    <property type="term" value="C:Golgi apparatus"/>
    <property type="evidence" value="ECO:0007669"/>
    <property type="project" value="UniProtKB-SubCell"/>
</dbReference>
<dbReference type="GO" id="GO:0005811">
    <property type="term" value="C:lipid droplet"/>
    <property type="evidence" value="ECO:0000314"/>
    <property type="project" value="UniProtKB"/>
</dbReference>
<dbReference type="GO" id="GO:0005743">
    <property type="term" value="C:mitochondrial inner membrane"/>
    <property type="evidence" value="ECO:0007669"/>
    <property type="project" value="UniProtKB-SubCell"/>
</dbReference>
<dbReference type="GO" id="GO:0005741">
    <property type="term" value="C:mitochondrial outer membrane"/>
    <property type="evidence" value="ECO:0007669"/>
    <property type="project" value="UniProtKB-SubCell"/>
</dbReference>
<dbReference type="GO" id="GO:0051539">
    <property type="term" value="F:4 iron, 4 sulfur cluster binding"/>
    <property type="evidence" value="ECO:0000250"/>
    <property type="project" value="UniProtKB"/>
</dbReference>
<dbReference type="GO" id="GO:0016829">
    <property type="term" value="F:lyase activity"/>
    <property type="evidence" value="ECO:0007669"/>
    <property type="project" value="UniProtKB-KW"/>
</dbReference>
<dbReference type="GO" id="GO:0046872">
    <property type="term" value="F:metal ion binding"/>
    <property type="evidence" value="ECO:0007669"/>
    <property type="project" value="UniProtKB-KW"/>
</dbReference>
<dbReference type="GO" id="GO:0035710">
    <property type="term" value="P:CD4-positive, alpha-beta T cell activation"/>
    <property type="evidence" value="ECO:0000315"/>
    <property type="project" value="UniProtKB"/>
</dbReference>
<dbReference type="GO" id="GO:0043367">
    <property type="term" value="P:CD4-positive, alpha-beta T cell differentiation"/>
    <property type="evidence" value="ECO:0000315"/>
    <property type="project" value="UniProtKB"/>
</dbReference>
<dbReference type="GO" id="GO:0051607">
    <property type="term" value="P:defense response to virus"/>
    <property type="evidence" value="ECO:0000314"/>
    <property type="project" value="UniProtKB"/>
</dbReference>
<dbReference type="GO" id="GO:0045087">
    <property type="term" value="P:innate immune response"/>
    <property type="evidence" value="ECO:0007669"/>
    <property type="project" value="UniProtKB-KW"/>
</dbReference>
<dbReference type="GO" id="GO:0050709">
    <property type="term" value="P:negative regulation of protein secretion"/>
    <property type="evidence" value="ECO:0000250"/>
    <property type="project" value="UniProtKB"/>
</dbReference>
<dbReference type="GO" id="GO:0045071">
    <property type="term" value="P:negative regulation of viral genome replication"/>
    <property type="evidence" value="ECO:0000315"/>
    <property type="project" value="UniProtKB"/>
</dbReference>
<dbReference type="GO" id="GO:2000553">
    <property type="term" value="P:positive regulation of T-helper 2 cell cytokine production"/>
    <property type="evidence" value="ECO:0000315"/>
    <property type="project" value="UniProtKB"/>
</dbReference>
<dbReference type="GO" id="GO:0034157">
    <property type="term" value="P:positive regulation of toll-like receptor 7 signaling pathway"/>
    <property type="evidence" value="ECO:0000315"/>
    <property type="project" value="UniProtKB"/>
</dbReference>
<dbReference type="GO" id="GO:0034165">
    <property type="term" value="P:positive regulation of toll-like receptor 9 signaling pathway"/>
    <property type="evidence" value="ECO:0000315"/>
    <property type="project" value="UniProtKB"/>
</dbReference>
<dbReference type="GO" id="GO:0009615">
    <property type="term" value="P:response to virus"/>
    <property type="evidence" value="ECO:0000315"/>
    <property type="project" value="UniProtKB"/>
</dbReference>
<dbReference type="CDD" id="cd01335">
    <property type="entry name" value="Radical_SAM"/>
    <property type="match status" value="1"/>
</dbReference>
<dbReference type="FunFam" id="3.20.20.70:FF:000152">
    <property type="entry name" value="radical S-adenosyl methionine domain-containing protein 2"/>
    <property type="match status" value="1"/>
</dbReference>
<dbReference type="Gene3D" id="3.20.20.70">
    <property type="entry name" value="Aldolase class I"/>
    <property type="match status" value="1"/>
</dbReference>
<dbReference type="InterPro" id="IPR013785">
    <property type="entry name" value="Aldolase_TIM"/>
</dbReference>
<dbReference type="InterPro" id="IPR006638">
    <property type="entry name" value="Elp3/MiaA/NifB-like_rSAM"/>
</dbReference>
<dbReference type="InterPro" id="IPR026372">
    <property type="entry name" value="RSAD2"/>
</dbReference>
<dbReference type="InterPro" id="IPR051196">
    <property type="entry name" value="RSAD2/Viperin_antiviral"/>
</dbReference>
<dbReference type="InterPro" id="IPR007197">
    <property type="entry name" value="rSAM"/>
</dbReference>
<dbReference type="NCBIfam" id="TIGR04278">
    <property type="entry name" value="viperin"/>
    <property type="match status" value="1"/>
</dbReference>
<dbReference type="NCBIfam" id="NF038283">
    <property type="entry name" value="viperin_w_prok"/>
    <property type="match status" value="1"/>
</dbReference>
<dbReference type="PANTHER" id="PTHR21339">
    <property type="entry name" value="RADICAL S-ADENOSYL METHIONINE DOMAIN-CONTAINING PROTEIN 2"/>
    <property type="match status" value="1"/>
</dbReference>
<dbReference type="PANTHER" id="PTHR21339:SF0">
    <property type="entry name" value="S-ADENOSYLMETHIONINE-DEPENDENT NUCLEOTIDE DEHYDRATASE RSAD2"/>
    <property type="match status" value="1"/>
</dbReference>
<dbReference type="Pfam" id="PF13353">
    <property type="entry name" value="Fer4_12"/>
    <property type="match status" value="1"/>
</dbReference>
<dbReference type="Pfam" id="PF04055">
    <property type="entry name" value="Radical_SAM"/>
    <property type="match status" value="1"/>
</dbReference>
<dbReference type="SFLD" id="SFLDG01088">
    <property type="entry name" value="antiviral_proteins"/>
    <property type="match status" value="1"/>
</dbReference>
<dbReference type="SFLD" id="SFLDG01067">
    <property type="entry name" value="SPASM/twitch_domain_containing"/>
    <property type="match status" value="1"/>
</dbReference>
<dbReference type="SFLD" id="SFLDF00318">
    <property type="entry name" value="Viperin"/>
    <property type="match status" value="1"/>
</dbReference>
<dbReference type="SMART" id="SM00729">
    <property type="entry name" value="Elp3"/>
    <property type="match status" value="1"/>
</dbReference>
<dbReference type="SUPFAM" id="SSF102114">
    <property type="entry name" value="Radical SAM enzymes"/>
    <property type="match status" value="1"/>
</dbReference>
<dbReference type="PROSITE" id="PS51918">
    <property type="entry name" value="RADICAL_SAM"/>
    <property type="match status" value="1"/>
</dbReference>
<organism>
    <name type="scientific">Mus musculus</name>
    <name type="common">Mouse</name>
    <dbReference type="NCBI Taxonomy" id="10090"/>
    <lineage>
        <taxon>Eukaryota</taxon>
        <taxon>Metazoa</taxon>
        <taxon>Chordata</taxon>
        <taxon>Craniata</taxon>
        <taxon>Vertebrata</taxon>
        <taxon>Euteleostomi</taxon>
        <taxon>Mammalia</taxon>
        <taxon>Eutheria</taxon>
        <taxon>Euarchontoglires</taxon>
        <taxon>Glires</taxon>
        <taxon>Rodentia</taxon>
        <taxon>Myomorpha</taxon>
        <taxon>Muroidea</taxon>
        <taxon>Muridae</taxon>
        <taxon>Murinae</taxon>
        <taxon>Mus</taxon>
        <taxon>Mus</taxon>
    </lineage>
</organism>
<evidence type="ECO:0000250" key="1">
    <source>
        <dbReference type="UniProtKB" id="Q8WXG1"/>
    </source>
</evidence>
<evidence type="ECO:0000255" key="2">
    <source>
        <dbReference type="PROSITE-ProRule" id="PRU01266"/>
    </source>
</evidence>
<evidence type="ECO:0000256" key="3">
    <source>
        <dbReference type="SAM" id="MobiDB-lite"/>
    </source>
</evidence>
<evidence type="ECO:0000269" key="4">
    <source>
    </source>
</evidence>
<evidence type="ECO:0000269" key="5">
    <source>
    </source>
</evidence>
<evidence type="ECO:0000269" key="6">
    <source>
    </source>
</evidence>
<evidence type="ECO:0000269" key="7">
    <source>
    </source>
</evidence>
<evidence type="ECO:0000269" key="8">
    <source>
    </source>
</evidence>
<evidence type="ECO:0000269" key="9">
    <source>
    </source>
</evidence>
<evidence type="ECO:0000269" key="10">
    <source>
    </source>
</evidence>
<evidence type="ECO:0000269" key="11">
    <source>
    </source>
</evidence>
<evidence type="ECO:0000269" key="12">
    <source>
    </source>
</evidence>
<evidence type="ECO:0000303" key="13">
    <source>
    </source>
</evidence>
<evidence type="ECO:0000303" key="14">
    <source>
    </source>
</evidence>
<evidence type="ECO:0000305" key="15"/>
<evidence type="ECO:0000312" key="16">
    <source>
        <dbReference type="EMBL" id="AAF60314.2"/>
    </source>
</evidence>
<evidence type="ECO:0000312" key="17">
    <source>
        <dbReference type="EMBL" id="AAH57868.1"/>
    </source>
</evidence>
<evidence type="ECO:0000312" key="18">
    <source>
        <dbReference type="EMBL" id="AAL50054.1"/>
    </source>
</evidence>
<evidence type="ECO:0000312" key="19">
    <source>
        <dbReference type="EMBL" id="BAC29401.1"/>
    </source>
</evidence>
<evidence type="ECO:0000312" key="20">
    <source>
        <dbReference type="EMBL" id="BAE31887.1"/>
    </source>
</evidence>
<evidence type="ECO:0000312" key="21">
    <source>
        <dbReference type="EMBL" id="CAJ18585.1"/>
    </source>
</evidence>
<evidence type="ECO:0000312" key="22">
    <source>
        <dbReference type="MGI" id="MGI:1929628"/>
    </source>
</evidence>
<evidence type="ECO:0007744" key="23">
    <source>
        <dbReference type="PDB" id="5VSL"/>
    </source>
</evidence>
<evidence type="ECO:0007744" key="24">
    <source>
        <dbReference type="PDB" id="5VSM"/>
    </source>
</evidence>
<evidence type="ECO:0007829" key="25">
    <source>
        <dbReference type="PDB" id="5VSM"/>
    </source>
</evidence>
<evidence type="ECO:0007829" key="26">
    <source>
        <dbReference type="PDB" id="6Q2P"/>
    </source>
</evidence>
<comment type="function">
    <text evidence="1 7 8 10 11">Interferon-inducible antiviral protein which plays a major role in the cell antiviral state induced by type I and type II interferon. Catalyzes the conversion of cytidine triphosphate (CTP) to 3'-deoxy-3',4'-didehydro-CTP (ddhCTP) via a SAM-dependent radical mechanism. In turn, ddhCTP acts as a chain terminator for the RNA-dependent RNA polymerases from multiple viruses and directly inhibits viral replication. Therefore, inhibits a wide range of DNA and RNA viruses (By similarity). Also promotes TLR7 and TLR9-dependent production of IFN-beta production in plasmacytoid dendritic cells (pDCs) by facilitating 'Lys-63'-linked ubiquitination of IRAK1 by TRAF6. Plays a role in CD4+ T-cells activation and differentiation. Facilitates T-cell receptor (TCR)-mediated GATA3 activation and optimal T-helper 2 (Th2) cytokine production by modulating NFKB1 and JUNB activities. Can inhibit secretion of soluble proteins (By similarity) (PubMed:17686841, PubMed:19047684, PubMed:21435586, PubMed:21880757).</text>
</comment>
<comment type="catalytic activity">
    <reaction evidence="1">
        <text>CTP + AH2 + S-adenosyl-L-methionine = 3'-deoxy-3',4'-didehydro-CTP + 5'-deoxyadenosine + L-methionine + A + H2O + H(+)</text>
        <dbReference type="Rhea" id="RHEA:65944"/>
        <dbReference type="ChEBI" id="CHEBI:13193"/>
        <dbReference type="ChEBI" id="CHEBI:15377"/>
        <dbReference type="ChEBI" id="CHEBI:15378"/>
        <dbReference type="ChEBI" id="CHEBI:17319"/>
        <dbReference type="ChEBI" id="CHEBI:17499"/>
        <dbReference type="ChEBI" id="CHEBI:37563"/>
        <dbReference type="ChEBI" id="CHEBI:57844"/>
        <dbReference type="ChEBI" id="CHEBI:59789"/>
        <dbReference type="ChEBI" id="CHEBI:166821"/>
    </reaction>
</comment>
<comment type="cofactor">
    <cofactor evidence="12 23 24">
        <name>[4Fe-4S] cluster</name>
        <dbReference type="ChEBI" id="CHEBI:49883"/>
    </cofactor>
    <text evidence="12 23 24">Binds 1 [4Fe-4S] cluster. The cluster is coordinated with 3 cysteines and an exchangeable S-adenosyl-L-methionine.</text>
</comment>
<comment type="activity regulation">
    <text evidence="1">IRAK1 and TRAF6 synergistically activate RSAD2 increasing its activity with CTP as substrate about 10-fold.</text>
</comment>
<comment type="subunit">
    <text evidence="1 10">Homodimer. Interacts with IRAK1 and TRAF6 (PubMed:21435586). Interacts with FPPS. Interacts with HADHB. Interacts (via C-terminus) with VAPA/VAP33 (via C-terminus) (By similarity).</text>
</comment>
<comment type="subcellular location">
    <subcellularLocation>
        <location evidence="1">Endoplasmic reticulum membrane</location>
        <topology evidence="1">Peripheral membrane protein</topology>
        <orientation evidence="1">Cytoplasmic side</orientation>
    </subcellularLocation>
    <subcellularLocation>
        <location evidence="1">Golgi apparatus</location>
    </subcellularLocation>
    <subcellularLocation>
        <location evidence="1">Endoplasmic reticulum</location>
    </subcellularLocation>
    <subcellularLocation>
        <location evidence="9 10">Lipid droplet</location>
    </subcellularLocation>
    <subcellularLocation>
        <location evidence="1">Mitochondrion</location>
    </subcellularLocation>
    <subcellularLocation>
        <location evidence="1">Mitochondrion inner membrane</location>
    </subcellularLocation>
    <subcellularLocation>
        <location evidence="1">Mitochondrion outer membrane</location>
    </subcellularLocation>
</comment>
<comment type="tissue specificity">
    <text evidence="5">Expressed at higher levels in atherosclerotic arteries than in normal arteries.</text>
</comment>
<comment type="induction">
    <text evidence="4 6">By interferon type I, type II and LPS. Induced by infection with Vesicular stomatitis virus and pseudorabies virus in dendritic cells, presumably through type I interferon pathway.</text>
</comment>
<comment type="domain">
    <text>The N-terminal region (1-43) is necessary for its localization to the endoplasmic reticulum membrane and lipid droplet.</text>
</comment>
<comment type="PTM">
    <text evidence="1">Acetylated by HAT1. HAT1-mediated acetylation of Lys-198 in turn recruits UBE4A that stimulates RSAD2 polyubiquitination leading to proteasomal degradation.</text>
</comment>
<comment type="PTM">
    <text evidence="1">'Lys-6'-linked polyubiquitination at Lys-207 leads to RSAD2 protein degradation.</text>
</comment>
<comment type="similarity">
    <text evidence="15">Belongs to the radical SAM superfamily. RSAD2 family.</text>
</comment>
<comment type="sequence caution" evidence="15">
    <conflict type="erroneous termination">
        <sequence resource="EMBL-CDS" id="BAE29281"/>
    </conflict>
    <text>Truncated C-terminus.</text>
</comment>
<keyword id="KW-0002">3D-structure</keyword>
<keyword id="KW-0004">4Fe-4S</keyword>
<keyword id="KW-0007">Acetylation</keyword>
<keyword id="KW-0051">Antiviral defense</keyword>
<keyword id="KW-0256">Endoplasmic reticulum</keyword>
<keyword id="KW-0333">Golgi apparatus</keyword>
<keyword id="KW-0391">Immunity</keyword>
<keyword id="KW-0399">Innate immunity</keyword>
<keyword id="KW-0408">Iron</keyword>
<keyword id="KW-0411">Iron-sulfur</keyword>
<keyword id="KW-1017">Isopeptide bond</keyword>
<keyword id="KW-0551">Lipid droplet</keyword>
<keyword id="KW-0456">Lyase</keyword>
<keyword id="KW-0472">Membrane</keyword>
<keyword id="KW-0479">Metal-binding</keyword>
<keyword id="KW-0496">Mitochondrion</keyword>
<keyword id="KW-0999">Mitochondrion inner membrane</keyword>
<keyword id="KW-1000">Mitochondrion outer membrane</keyword>
<keyword id="KW-1185">Reference proteome</keyword>
<keyword id="KW-0949">S-adenosyl-L-methionine</keyword>
<keyword id="KW-0832">Ubl conjugation</keyword>
<name>RSAD2_MOUSE</name>
<feature type="chain" id="PRO_0000309584" description="S-adenosylmethionine-dependent nucleotide dehydratase RSAD2">
    <location>
        <begin position="1"/>
        <end position="362"/>
    </location>
</feature>
<feature type="domain" description="Radical SAM core" evidence="2">
    <location>
        <begin position="70"/>
        <end position="290"/>
    </location>
</feature>
<feature type="region of interest" description="Disordered" evidence="3">
    <location>
        <begin position="47"/>
        <end position="73"/>
    </location>
</feature>
<feature type="compositionally biased region" description="Polar residues" evidence="3">
    <location>
        <begin position="64"/>
        <end position="73"/>
    </location>
</feature>
<feature type="binding site" evidence="12 23 24">
    <location>
        <position position="84"/>
    </location>
    <ligand>
        <name>[4Fe-4S] cluster</name>
        <dbReference type="ChEBI" id="CHEBI:49883"/>
        <note>4Fe-4S-S-AdoMet</note>
    </ligand>
</feature>
<feature type="binding site" evidence="12 23 24">
    <location>
        <position position="88"/>
    </location>
    <ligand>
        <name>[4Fe-4S] cluster</name>
        <dbReference type="ChEBI" id="CHEBI:49883"/>
        <note>4Fe-4S-S-AdoMet</note>
    </ligand>
</feature>
<feature type="binding site" evidence="12 23 24">
    <location>
        <position position="91"/>
    </location>
    <ligand>
        <name>[4Fe-4S] cluster</name>
        <dbReference type="ChEBI" id="CHEBI:49883"/>
        <note>4Fe-4S-S-AdoMet</note>
    </ligand>
</feature>
<feature type="modified residue" description="N6-acetyllysine" evidence="1">
    <location>
        <position position="198"/>
    </location>
</feature>
<feature type="cross-link" description="Glycyl lysine isopeptide (Lys-Gly) (interchain with G-Cter in ubiquitin)" evidence="1">
    <location>
        <position position="207"/>
    </location>
</feature>
<feature type="sequence conflict" description="In Ref. 2; BAE31578/BAE30379/BAE29807/BAE29764." evidence="15" ref="2">
    <original>S</original>
    <variation>R</variation>
    <location>
        <position position="15"/>
    </location>
</feature>
<feature type="sequence conflict" description="In Ref. 2; BAE30676." evidence="15" ref="2">
    <original>S</original>
    <variation>C</variation>
    <location>
        <position position="26"/>
    </location>
</feature>
<feature type="sequence conflict" description="In Ref. 2; BAE31898/BAE31903." evidence="15" ref="2">
    <original>S</original>
    <variation>G</variation>
    <location>
        <position position="26"/>
    </location>
</feature>
<feature type="sequence conflict" description="In Ref. 2; BAE30920." evidence="15" ref="2">
    <original>R</original>
    <variation>P</variation>
    <location>
        <position position="52"/>
    </location>
</feature>
<feature type="sequence conflict" description="In Ref. 1; AAF60314, 3; CAJ18585, 4; AAH57868 and 5; AAL50054." evidence="15" ref="1 3 4 5">
    <original>P</original>
    <variation>L</variation>
    <location>
        <position position="55"/>
    </location>
</feature>
<feature type="sequence conflict" description="In Ref. 1; AAF60314, 3; CAJ18585, 4; AAH57868 and 5; AAL50054." evidence="15" ref="1 3 4 5">
    <original>D</original>
    <variation>E</variation>
    <location>
        <position position="57"/>
    </location>
</feature>
<feature type="sequence conflict" description="In Ref. 1; AAF60314, 3; CAJ18585, 4; AAH57868 and 5; AAL50054." evidence="15" ref="1 3 4 5">
    <original>P</original>
    <variation>R</variation>
    <location>
        <position position="70"/>
    </location>
</feature>
<feature type="sequence conflict" description="In Ref. 2; BAE31898." evidence="15" ref="2">
    <original>P</original>
    <variation>T</variation>
    <location>
        <position position="73"/>
    </location>
</feature>
<feature type="sequence conflict" description="In Ref. 2; BAE30826/BAE32092." evidence="15" ref="2">
    <original>T</original>
    <variation>K</variation>
    <location>
        <position position="94"/>
    </location>
</feature>
<feature type="sequence conflict" description="In Ref. 2; BAE29848." evidence="15" ref="2">
    <original>G</original>
    <variation>E</variation>
    <location>
        <position position="125"/>
    </location>
</feature>
<feature type="sequence conflict" description="In Ref. 2; BAE31064." evidence="15" ref="2">
    <original>L</original>
    <variation>Q</variation>
    <location>
        <position position="148"/>
    </location>
</feature>
<feature type="sequence conflict" description="In Ref. 2; BAE30826." evidence="15" ref="2">
    <original>A</original>
    <variation>S</variation>
    <location>
        <position position="149"/>
    </location>
</feature>
<feature type="sequence conflict" description="In Ref. 1; AAF60314 and 5; AAL50054." evidence="15" ref="1 5">
    <original>R</original>
    <variation>Q</variation>
    <location>
        <position position="163"/>
    </location>
</feature>
<feature type="sequence conflict" description="In Ref. 2; BAE31565/BAE31383/BAE30737." evidence="15" ref="2">
    <original>W</original>
    <variation>R</variation>
    <location>
        <position position="211"/>
    </location>
</feature>
<feature type="sequence conflict" description="In Ref. 2; BAE31898/BAE31903." evidence="15" ref="2">
    <original>L</original>
    <variation>Q</variation>
    <location>
        <position position="241"/>
    </location>
</feature>
<feature type="sequence conflict" description="In Ref. 2; BAE30673/BAE30203." evidence="15" ref="2">
    <original>K</original>
    <variation>E</variation>
    <location>
        <position position="247"/>
    </location>
</feature>
<feature type="sequence conflict" description="In Ref. 2; BAE30726." evidence="15" ref="2">
    <original>D</original>
    <variation>G</variation>
    <location>
        <position position="262"/>
    </location>
</feature>
<feature type="sequence conflict" description="In Ref. 2; BAE31348." evidence="15" ref="2">
    <original>F</original>
    <variation>L</variation>
    <location>
        <position position="270"/>
    </location>
</feature>
<feature type="sequence conflict" description="In Ref. 2; BAE31064." evidence="15" ref="2">
    <original>S</original>
    <variation>G</variation>
    <location>
        <position position="273"/>
    </location>
</feature>
<feature type="sequence conflict" description="In Ref. 2; BAE30676/BAE30787/BAE30790/BAE30920/BAE30927." evidence="15" ref="2">
    <original>F</original>
    <variation>Y</variation>
    <location>
        <position position="339"/>
    </location>
</feature>
<feature type="strand" evidence="26">
    <location>
        <begin position="75"/>
        <end position="79"/>
    </location>
</feature>
<feature type="helix" evidence="26">
    <location>
        <begin position="103"/>
        <end position="115"/>
    </location>
</feature>
<feature type="strand" evidence="26">
    <location>
        <begin position="120"/>
        <end position="126"/>
    </location>
</feature>
<feature type="helix" evidence="26">
    <location>
        <begin position="128"/>
        <end position="134"/>
    </location>
</feature>
<feature type="helix" evidence="26">
    <location>
        <begin position="135"/>
        <end position="146"/>
    </location>
</feature>
<feature type="strand" evidence="26">
    <location>
        <begin position="151"/>
        <end position="157"/>
    </location>
</feature>
<feature type="helix" evidence="26">
    <location>
        <begin position="164"/>
        <end position="170"/>
    </location>
</feature>
<feature type="helix" evidence="26">
    <location>
        <begin position="171"/>
        <end position="173"/>
    </location>
</feature>
<feature type="strand" evidence="26">
    <location>
        <begin position="175"/>
        <end position="180"/>
    </location>
</feature>
<feature type="helix" evidence="26">
    <location>
        <begin position="186"/>
        <end position="192"/>
    </location>
</feature>
<feature type="strand" evidence="25">
    <location>
        <begin position="195"/>
        <end position="198"/>
    </location>
</feature>
<feature type="helix" evidence="26">
    <location>
        <begin position="201"/>
        <end position="215"/>
    </location>
</feature>
<feature type="strand" evidence="26">
    <location>
        <begin position="218"/>
        <end position="225"/>
    </location>
</feature>
<feature type="turn" evidence="26">
    <location>
        <begin position="227"/>
        <end position="231"/>
    </location>
</feature>
<feature type="helix" evidence="26">
    <location>
        <begin position="235"/>
        <end position="241"/>
    </location>
</feature>
<feature type="strand" evidence="26">
    <location>
        <begin position="244"/>
        <end position="250"/>
    </location>
</feature>
<feature type="turn" evidence="26">
    <location>
        <begin position="255"/>
        <end position="257"/>
    </location>
</feature>
<feature type="strand" evidence="26">
    <location>
        <begin position="258"/>
        <end position="260"/>
    </location>
</feature>
<feature type="helix" evidence="26">
    <location>
        <begin position="268"/>
        <end position="270"/>
    </location>
</feature>
<feature type="helix" evidence="26">
    <location>
        <begin position="274"/>
        <end position="283"/>
    </location>
</feature>
<feature type="turn" evidence="26">
    <location>
        <begin position="284"/>
        <end position="286"/>
    </location>
</feature>
<feature type="strand" evidence="26">
    <location>
        <begin position="290"/>
        <end position="293"/>
    </location>
</feature>
<feature type="helix" evidence="26">
    <location>
        <begin position="295"/>
        <end position="298"/>
    </location>
</feature>
<feature type="strand" evidence="26">
    <location>
        <begin position="301"/>
        <end position="305"/>
    </location>
</feature>
<feature type="strand" evidence="26">
    <location>
        <begin position="309"/>
        <end position="313"/>
    </location>
</feature>
<feature type="strand" evidence="26">
    <location>
        <begin position="320"/>
        <end position="324"/>
    </location>
</feature>
<feature type="helix" evidence="26">
    <location>
        <begin position="325"/>
        <end position="328"/>
    </location>
</feature>
<feature type="helix" evidence="26">
    <location>
        <begin position="330"/>
        <end position="334"/>
    </location>
</feature>
<feature type="helix" evidence="26">
    <location>
        <begin position="341"/>
        <end position="346"/>
    </location>
</feature>
<feature type="helix" evidence="26">
    <location>
        <begin position="355"/>
        <end position="357"/>
    </location>
</feature>
<gene>
    <name evidence="22" type="primary">Rsad2</name>
    <name evidence="18" type="synonym">Vig1</name>
</gene>
<reference evidence="15 16" key="1">
    <citation type="journal article" date="2000" name="J. Gen. Virol.">
        <title>Vesicular stomatitis virus and pseudorabies virus induce a vig1/cig5 homologue in mouse dendritic cells via different pathways.</title>
        <authorList>
            <person name="Boudinot P."/>
            <person name="Riffault S."/>
            <person name="Salhi S."/>
            <person name="Carrat C."/>
            <person name="Sedlik C."/>
            <person name="Mahmoudi N."/>
            <person name="Charley B."/>
            <person name="Benmansour A."/>
        </authorList>
    </citation>
    <scope>NUCLEOTIDE SEQUENCE [MRNA]</scope>
    <scope>INDUCTION</scope>
    <source>
        <strain evidence="4">C57BL/6J</strain>
        <tissue evidence="4">Lymph node</tissue>
    </source>
</reference>
<reference evidence="19" key="2">
    <citation type="journal article" date="2005" name="Science">
        <title>The transcriptional landscape of the mammalian genome.</title>
        <authorList>
            <person name="Carninci P."/>
            <person name="Kasukawa T."/>
            <person name="Katayama S."/>
            <person name="Gough J."/>
            <person name="Frith M.C."/>
            <person name="Maeda N."/>
            <person name="Oyama R."/>
            <person name="Ravasi T."/>
            <person name="Lenhard B."/>
            <person name="Wells C."/>
            <person name="Kodzius R."/>
            <person name="Shimokawa K."/>
            <person name="Bajic V.B."/>
            <person name="Brenner S.E."/>
            <person name="Batalov S."/>
            <person name="Forrest A.R."/>
            <person name="Zavolan M."/>
            <person name="Davis M.J."/>
            <person name="Wilming L.G."/>
            <person name="Aidinis V."/>
            <person name="Allen J.E."/>
            <person name="Ambesi-Impiombato A."/>
            <person name="Apweiler R."/>
            <person name="Aturaliya R.N."/>
            <person name="Bailey T.L."/>
            <person name="Bansal M."/>
            <person name="Baxter L."/>
            <person name="Beisel K.W."/>
            <person name="Bersano T."/>
            <person name="Bono H."/>
            <person name="Chalk A.M."/>
            <person name="Chiu K.P."/>
            <person name="Choudhary V."/>
            <person name="Christoffels A."/>
            <person name="Clutterbuck D.R."/>
            <person name="Crowe M.L."/>
            <person name="Dalla E."/>
            <person name="Dalrymple B.P."/>
            <person name="de Bono B."/>
            <person name="Della Gatta G."/>
            <person name="di Bernardo D."/>
            <person name="Down T."/>
            <person name="Engstrom P."/>
            <person name="Fagiolini M."/>
            <person name="Faulkner G."/>
            <person name="Fletcher C.F."/>
            <person name="Fukushima T."/>
            <person name="Furuno M."/>
            <person name="Futaki S."/>
            <person name="Gariboldi M."/>
            <person name="Georgii-Hemming P."/>
            <person name="Gingeras T.R."/>
            <person name="Gojobori T."/>
            <person name="Green R.E."/>
            <person name="Gustincich S."/>
            <person name="Harbers M."/>
            <person name="Hayashi Y."/>
            <person name="Hensch T.K."/>
            <person name="Hirokawa N."/>
            <person name="Hill D."/>
            <person name="Huminiecki L."/>
            <person name="Iacono M."/>
            <person name="Ikeo K."/>
            <person name="Iwama A."/>
            <person name="Ishikawa T."/>
            <person name="Jakt M."/>
            <person name="Kanapin A."/>
            <person name="Katoh M."/>
            <person name="Kawasawa Y."/>
            <person name="Kelso J."/>
            <person name="Kitamura H."/>
            <person name="Kitano H."/>
            <person name="Kollias G."/>
            <person name="Krishnan S.P."/>
            <person name="Kruger A."/>
            <person name="Kummerfeld S.K."/>
            <person name="Kurochkin I.V."/>
            <person name="Lareau L.F."/>
            <person name="Lazarevic D."/>
            <person name="Lipovich L."/>
            <person name="Liu J."/>
            <person name="Liuni S."/>
            <person name="McWilliam S."/>
            <person name="Madan Babu M."/>
            <person name="Madera M."/>
            <person name="Marchionni L."/>
            <person name="Matsuda H."/>
            <person name="Matsuzawa S."/>
            <person name="Miki H."/>
            <person name="Mignone F."/>
            <person name="Miyake S."/>
            <person name="Morris K."/>
            <person name="Mottagui-Tabar S."/>
            <person name="Mulder N."/>
            <person name="Nakano N."/>
            <person name="Nakauchi H."/>
            <person name="Ng P."/>
            <person name="Nilsson R."/>
            <person name="Nishiguchi S."/>
            <person name="Nishikawa S."/>
            <person name="Nori F."/>
            <person name="Ohara O."/>
            <person name="Okazaki Y."/>
            <person name="Orlando V."/>
            <person name="Pang K.C."/>
            <person name="Pavan W.J."/>
            <person name="Pavesi G."/>
            <person name="Pesole G."/>
            <person name="Petrovsky N."/>
            <person name="Piazza S."/>
            <person name="Reed J."/>
            <person name="Reid J.F."/>
            <person name="Ring B.Z."/>
            <person name="Ringwald M."/>
            <person name="Rost B."/>
            <person name="Ruan Y."/>
            <person name="Salzberg S.L."/>
            <person name="Sandelin A."/>
            <person name="Schneider C."/>
            <person name="Schoenbach C."/>
            <person name="Sekiguchi K."/>
            <person name="Semple C.A."/>
            <person name="Seno S."/>
            <person name="Sessa L."/>
            <person name="Sheng Y."/>
            <person name="Shibata Y."/>
            <person name="Shimada H."/>
            <person name="Shimada K."/>
            <person name="Silva D."/>
            <person name="Sinclair B."/>
            <person name="Sperling S."/>
            <person name="Stupka E."/>
            <person name="Sugiura K."/>
            <person name="Sultana R."/>
            <person name="Takenaka Y."/>
            <person name="Taki K."/>
            <person name="Tammoja K."/>
            <person name="Tan S.L."/>
            <person name="Tang S."/>
            <person name="Taylor M.S."/>
            <person name="Tegner J."/>
            <person name="Teichmann S.A."/>
            <person name="Ueda H.R."/>
            <person name="van Nimwegen E."/>
            <person name="Verardo R."/>
            <person name="Wei C.L."/>
            <person name="Yagi K."/>
            <person name="Yamanishi H."/>
            <person name="Zabarovsky E."/>
            <person name="Zhu S."/>
            <person name="Zimmer A."/>
            <person name="Hide W."/>
            <person name="Bult C."/>
            <person name="Grimmond S.M."/>
            <person name="Teasdale R.D."/>
            <person name="Liu E.T."/>
            <person name="Brusic V."/>
            <person name="Quackenbush J."/>
            <person name="Wahlestedt C."/>
            <person name="Mattick J.S."/>
            <person name="Hume D.A."/>
            <person name="Kai C."/>
            <person name="Sasaki D."/>
            <person name="Tomaru Y."/>
            <person name="Fukuda S."/>
            <person name="Kanamori-Katayama M."/>
            <person name="Suzuki M."/>
            <person name="Aoki J."/>
            <person name="Arakawa T."/>
            <person name="Iida J."/>
            <person name="Imamura K."/>
            <person name="Itoh M."/>
            <person name="Kato T."/>
            <person name="Kawaji H."/>
            <person name="Kawagashira N."/>
            <person name="Kawashima T."/>
            <person name="Kojima M."/>
            <person name="Kondo S."/>
            <person name="Konno H."/>
            <person name="Nakano K."/>
            <person name="Ninomiya N."/>
            <person name="Nishio T."/>
            <person name="Okada M."/>
            <person name="Plessy C."/>
            <person name="Shibata K."/>
            <person name="Shiraki T."/>
            <person name="Suzuki S."/>
            <person name="Tagami M."/>
            <person name="Waki K."/>
            <person name="Watahiki A."/>
            <person name="Okamura-Oho Y."/>
            <person name="Suzuki H."/>
            <person name="Kawai J."/>
            <person name="Hayashizaki Y."/>
        </authorList>
    </citation>
    <scope>NUCLEOTIDE SEQUENCE [LARGE SCALE MRNA]</scope>
    <source>
        <strain evidence="19">C57BL/6J</strain>
        <tissue evidence="19">Bone</tissue>
        <tissue evidence="20">Bone marrow</tissue>
    </source>
</reference>
<reference evidence="21" key="3">
    <citation type="submission" date="2005-07" db="EMBL/GenBank/DDBJ databases">
        <title>Cloning of mouse full open reading frames in Gateway(R) system entry vector (pDONR201).</title>
        <authorList>
            <person name="Ebert L."/>
            <person name="Muenstermann E."/>
            <person name="Schatten R."/>
            <person name="Henze S."/>
            <person name="Bohn E."/>
            <person name="Mollenhauer J."/>
            <person name="Wiemann S."/>
            <person name="Schick M."/>
            <person name="Korn B."/>
        </authorList>
    </citation>
    <scope>NUCLEOTIDE SEQUENCE [LARGE SCALE MRNA]</scope>
</reference>
<reference evidence="17" key="4">
    <citation type="journal article" date="2004" name="Genome Res.">
        <title>The status, quality, and expansion of the NIH full-length cDNA project: the Mammalian Gene Collection (MGC).</title>
        <authorList>
            <consortium name="The MGC Project Team"/>
        </authorList>
    </citation>
    <scope>NUCLEOTIDE SEQUENCE [LARGE SCALE MRNA]</scope>
    <source>
        <strain evidence="17">NMRI</strain>
        <tissue evidence="17">Mammary tumor</tissue>
    </source>
</reference>
<reference evidence="15 18" key="5">
    <citation type="journal article" date="2001" name="Proc. Natl. Acad. Sci. U.S.A.">
        <title>Viperin (cig5), an IFN-inducible antiviral protein directly induced by human cytomegalovirus.</title>
        <authorList>
            <person name="Chin K.-C."/>
            <person name="Cresswell P."/>
        </authorList>
    </citation>
    <scope>NUCLEOTIDE SEQUENCE [MRNA] OF 3-362</scope>
</reference>
<reference evidence="15" key="6">
    <citation type="journal article" date="2005" name="Arterioscler. Thromb. Vasc. Biol.">
        <title>The antiviral cytomegalovirus inducible gene 5/viperin is expressed in atherosclerosis and regulated by proinflammatory agents.</title>
        <authorList>
            <person name="Olofsson P.S."/>
            <person name="Jatta K."/>
            <person name="Waagsaeter D."/>
            <person name="Gredmark S."/>
            <person name="Hedin U."/>
            <person name="Paulsson-Berne G."/>
            <person name="Soederberg-Naucler C."/>
            <person name="Hansson G.K."/>
            <person name="Sirsjoe A."/>
        </authorList>
    </citation>
    <scope>TISSUE SPECIFICITY</scope>
</reference>
<reference evidence="15" key="7">
    <citation type="journal article" date="2006" name="J. Biol. Chem.">
        <title>Toll-like receptor-dependent and -independent viperin gene expression and counter-regulation by PRDI-binding factor-1/BLIMP1.</title>
        <authorList>
            <person name="Severa M."/>
            <person name="Coccia E.M."/>
            <person name="Fitzgerald K.A."/>
        </authorList>
    </citation>
    <scope>INDUCTION</scope>
</reference>
<reference evidence="15" key="8">
    <citation type="journal article" date="2007" name="J. Virol.">
        <title>Identification and characterization of interferon-induced proteins that inhibit alphavirus replication.</title>
        <authorList>
            <person name="Zhang Y."/>
            <person name="Burke C.W."/>
            <person name="Ryman K.D."/>
            <person name="Klimstra W.B."/>
        </authorList>
    </citation>
    <scope>FUNCTION</scope>
</reference>
<reference key="9">
    <citation type="journal article" date="2009" name="Blood">
        <title>Viperin is required for optimal Th2 responses and T-cell receptor-mediated activation of NF-kappaB and AP-1.</title>
        <authorList>
            <person name="Qiu L.Q."/>
            <person name="Cresswell P."/>
            <person name="Chin K.C."/>
        </authorList>
    </citation>
    <scope>FUNCTION</scope>
</reference>
<reference key="10">
    <citation type="journal article" date="2009" name="Proc. Natl. Acad. Sci. U.S.A.">
        <title>The antiviral protein, viperin, localizes to lipid droplets via its N-terminal amphipathic alpha-helix.</title>
        <authorList>
            <person name="Hinson E.R."/>
            <person name="Cresswell P."/>
        </authorList>
    </citation>
    <scope>SUBCELLULAR LOCATION</scope>
</reference>
<reference key="11">
    <citation type="journal article" date="2010" name="Cell">
        <title>A tissue-specific atlas of mouse protein phosphorylation and expression.</title>
        <authorList>
            <person name="Huttlin E.L."/>
            <person name="Jedrychowski M.P."/>
            <person name="Elias J.E."/>
            <person name="Goswami T."/>
            <person name="Rad R."/>
            <person name="Beausoleil S.A."/>
            <person name="Villen J."/>
            <person name="Haas W."/>
            <person name="Sowa M.E."/>
            <person name="Gygi S.P."/>
        </authorList>
    </citation>
    <scope>IDENTIFICATION BY MASS SPECTROMETRY [LARGE SCALE ANALYSIS]</scope>
    <source>
        <tissue>Spleen</tissue>
    </source>
</reference>
<reference key="12">
    <citation type="journal article" date="2011" name="Cell Host Microbe">
        <title>Viperin: a multifunctional, interferon-inducible protein that regulates virus replication.</title>
        <authorList>
            <person name="Seo J.Y."/>
            <person name="Yaneva R."/>
            <person name="Cresswell P."/>
        </authorList>
    </citation>
    <scope>REVIEW</scope>
</reference>
<reference key="13">
    <citation type="journal article" date="2011" name="Immunity">
        <title>Antiviral protein Viperin promotes Toll-like receptor 7- and Toll-like receptor 9-mediated type I interferon production in plasmacytoid dendritic cells.</title>
        <authorList>
            <person name="Saitoh T."/>
            <person name="Satoh T."/>
            <person name="Yamamoto N."/>
            <person name="Uematsu S."/>
            <person name="Takeuchi O."/>
            <person name="Kawai T."/>
            <person name="Akira S."/>
        </authorList>
    </citation>
    <scope>FUNCTION</scope>
    <scope>SUBCELLULAR LOCATION</scope>
    <scope>INTERACTION WITH IRAK1 AND TRAF6</scope>
</reference>
<reference key="14">
    <citation type="journal article" date="2011" name="J. Virol.">
        <title>The interferon-inducible gene viperin restricts West Nile virus pathogenesis.</title>
        <authorList>
            <person name="Szretter K.J."/>
            <person name="Brien J.D."/>
            <person name="Thackray L.B."/>
            <person name="Virgin H.W."/>
            <person name="Cresswell P."/>
            <person name="Diamond M.S."/>
        </authorList>
    </citation>
    <scope>FUNCTION</scope>
</reference>
<reference key="15">
    <citation type="journal article" date="2022" name="Front. Mol. Biosci.">
        <title>Radical-SAM dependent nucleotide dehydratase (SAND), rectification of the names of an ancient iron-sulfur enzyme using NC-IUBMB recommendations.</title>
        <authorList>
            <person name="Ji Y."/>
            <person name="Wei L."/>
            <person name="Da A."/>
            <person name="Stark H."/>
            <person name="Hagedoorn P.-L."/>
            <person name="Ciofi-Baffoni S."/>
            <person name="Cowley S.A."/>
            <person name="Louro R.O."/>
            <person name="Todorovic S."/>
            <person name="Mroginski M.A."/>
            <person name="Nicolet Y."/>
            <person name="Roessler M.M."/>
            <person name="Le Brun N.E."/>
            <person name="Piccioli M."/>
            <person name="James W.S."/>
            <person name="Hagen W.R."/>
            <person name="Ebrahimi K.H."/>
        </authorList>
    </citation>
    <scope>NOMENCLATURE</scope>
</reference>
<reference evidence="23 24" key="16">
    <citation type="journal article" date="2017" name="Proc. Natl. Acad. Sci. U.S.A.">
        <title>Structural studies of viperin, an antiviral radical SAM enzyme.</title>
        <authorList>
            <person name="Fenwick M.K."/>
            <person name="Li Y."/>
            <person name="Cresswell P."/>
            <person name="Modis Y."/>
            <person name="Ealick S.E."/>
        </authorList>
    </citation>
    <scope>X-RAY CRYSTALLOGRAPHY (1.70 ANGSTROMS) OF 45-362 IN COMPLEX WITH IRON-SULFUR (4FE-4S) AND S-ADENOSYL-L-METHIONINE</scope>
    <scope>COFACTOR</scope>
</reference>
<protein>
    <recommendedName>
        <fullName evidence="14">S-adenosylmethionine-dependent nucleotide dehydratase RSAD2</fullName>
        <shortName evidence="14">SAND</shortName>
        <ecNumber evidence="1">4.2.-.-</ecNumber>
    </recommendedName>
    <alternativeName>
        <fullName evidence="22">Radical S-adenosyl methionine domain-containing protein 2</fullName>
    </alternativeName>
    <alternativeName>
        <fullName evidence="13">Virus inhibitory protein, endoplasmic reticulum-associated, interferon-inducible</fullName>
        <shortName evidence="13">Viperin</shortName>
    </alternativeName>
</protein>
<sequence>MGMLVPTALAARLLSLFQQQLGSLWSGLAILFCWLRIALGWLDPGKEQPQVRGEPEDTQETQEDGNSTQPTTPVSVNYHFTRQCNYKCGFCFHTAKTSFVLPLEEAKRGLLLLKQAGLEKINFSGGEPFLQDRGEYLGKLVRFCKEELALPSVSIVSNGSLIRERWFKDYGEYLDILAISCDSFDEQVNALIGRGQGKKNHVENLQKLRRWCRDYKVAFKINSVINRFNVDEDMNEHIKALSPVRWKVFQCLLIEGENSGEDALREAERFLISNEEFETFLERHKEVSCLVPESNQKMKDSYLILDEYMRFLNCTGGRKDPSKSILDVGVEEAIKFSGFDEKMFLKRGGKYVWSKADLKLDW</sequence>
<proteinExistence type="evidence at protein level"/>